<sequence>MADILLLDNIDSFTYNLADQLRSNGHNVVIYRNHIPAQTLIERLATMSNPVLMLSPGPGVPSEAGCMPELLTRLRGKLPIIGICLGHQAIVEAYGGYVGQAGEILHGKASSIEHDGQAMFAGLTNPLPVARYHSLVGSNIPAGLTINAHFNGMVMAVRHDADRVCGFQFHPESILTTQGARLLEQTLAWAQQKLEPANTLQPILEKLYQAQTLSQQESHQLFSAVVRGELKPEQLAAALVSMKIRGEHPNEIAGAATALLENAAPFPRPDYLFADIVGTGGDGSNSINISTASAFVAAACGLKVAKHGNRSVSSKSGSSDLLAAFGINLDMNADKSRQALDELGVCFLFAPKYHTGFRHAMPVRQQLKTRTLFNVLGPLINPAHPPLALIGVYSPELVLPIAETLRVLGYQRAAVVHSGGMDEVSLHAPTIVAELHDGEIKSYQLTAEDFGLTPYHQEQLAGGTPEENRDILTRLLQGKGDAAHEAAVAANVAMLMRLHGHEDLQANAQTVLEVLRSGSAYDRVTALAARG</sequence>
<proteinExistence type="evidence at protein level"/>
<gene>
    <name type="primary">trpGD</name>
    <name type="synonym">trpD</name>
    <name type="ordered locus">b1263</name>
    <name type="ordered locus">JW1255</name>
</gene>
<evidence type="ECO:0000250" key="1"/>
<evidence type="ECO:0000250" key="2">
    <source>
        <dbReference type="UniProtKB" id="P00900"/>
    </source>
</evidence>
<evidence type="ECO:0000269" key="3">
    <source>
    </source>
</evidence>
<evidence type="ECO:0000269" key="4">
    <source>
    </source>
</evidence>
<evidence type="ECO:0000269" key="5">
    <source>
    </source>
</evidence>
<evidence type="ECO:0000269" key="6">
    <source>
    </source>
</evidence>
<evidence type="ECO:0000305" key="7"/>
<evidence type="ECO:0000305" key="8">
    <source>
    </source>
</evidence>
<evidence type="ECO:0000305" key="9">
    <source>
    </source>
</evidence>
<evidence type="ECO:0000305" key="10">
    <source>
    </source>
</evidence>
<reference key="1">
    <citation type="journal article" date="1981" name="Nucleic Acids Res.">
        <title>The complete nucleotide sequence of the tryptophan operon of Escherichia coli.</title>
        <authorList>
            <person name="Yanofsky C."/>
            <person name="Platt T."/>
            <person name="Crawford I.P."/>
            <person name="Nichols B.P."/>
            <person name="Christie G.E."/>
            <person name="Horowitz H."/>
            <person name="van Cleemput M."/>
            <person name="Wu A.M."/>
        </authorList>
    </citation>
    <scope>NUCLEOTIDE SEQUENCE [GENOMIC DNA]</scope>
</reference>
<reference key="2">
    <citation type="journal article" date="1982" name="J. Mol. Biol.">
        <title>Nucleotide sequence of the trpD gene, encoding anthranilate synthetase component II of Escherichia coli.</title>
        <authorList>
            <person name="Horowitz H."/>
            <person name="Christie G.E."/>
            <person name="Platt T."/>
        </authorList>
    </citation>
    <scope>NUCLEOTIDE SEQUENCE [GENOMIC DNA]</scope>
</reference>
<reference key="3">
    <citation type="journal article" date="1996" name="DNA Res.">
        <title>A 570-kb DNA sequence of the Escherichia coli K-12 genome corresponding to the 28.0-40.1 min region on the linkage map.</title>
        <authorList>
            <person name="Aiba H."/>
            <person name="Baba T."/>
            <person name="Fujita K."/>
            <person name="Hayashi K."/>
            <person name="Inada T."/>
            <person name="Isono K."/>
            <person name="Itoh T."/>
            <person name="Kasai H."/>
            <person name="Kashimoto K."/>
            <person name="Kimura S."/>
            <person name="Kitakawa M."/>
            <person name="Kitagawa M."/>
            <person name="Makino K."/>
            <person name="Miki T."/>
            <person name="Mizobuchi K."/>
            <person name="Mori H."/>
            <person name="Mori T."/>
            <person name="Motomura K."/>
            <person name="Nakade S."/>
            <person name="Nakamura Y."/>
            <person name="Nashimoto H."/>
            <person name="Nishio Y."/>
            <person name="Oshima T."/>
            <person name="Saito N."/>
            <person name="Sampei G."/>
            <person name="Seki Y."/>
            <person name="Sivasundaram S."/>
            <person name="Tagami H."/>
            <person name="Takeda J."/>
            <person name="Takemoto K."/>
            <person name="Takeuchi Y."/>
            <person name="Wada C."/>
            <person name="Yamamoto Y."/>
            <person name="Horiuchi T."/>
        </authorList>
    </citation>
    <scope>NUCLEOTIDE SEQUENCE [LARGE SCALE GENOMIC DNA]</scope>
    <source>
        <strain>K12 / W3110 / ATCC 27325 / DSM 5911</strain>
    </source>
</reference>
<reference key="4">
    <citation type="journal article" date="1997" name="Science">
        <title>The complete genome sequence of Escherichia coli K-12.</title>
        <authorList>
            <person name="Blattner F.R."/>
            <person name="Plunkett G. III"/>
            <person name="Bloch C.A."/>
            <person name="Perna N.T."/>
            <person name="Burland V."/>
            <person name="Riley M."/>
            <person name="Collado-Vides J."/>
            <person name="Glasner J.D."/>
            <person name="Rode C.K."/>
            <person name="Mayhew G.F."/>
            <person name="Gregor J."/>
            <person name="Davis N.W."/>
            <person name="Kirkpatrick H.A."/>
            <person name="Goeden M.A."/>
            <person name="Rose D.J."/>
            <person name="Mau B."/>
            <person name="Shao Y."/>
        </authorList>
    </citation>
    <scope>NUCLEOTIDE SEQUENCE [LARGE SCALE GENOMIC DNA]</scope>
    <source>
        <strain>K12 / MG1655 / ATCC 47076</strain>
    </source>
</reference>
<reference key="5">
    <citation type="journal article" date="2006" name="Mol. Syst. Biol.">
        <title>Highly accurate genome sequences of Escherichia coli K-12 strains MG1655 and W3110.</title>
        <authorList>
            <person name="Hayashi K."/>
            <person name="Morooka N."/>
            <person name="Yamamoto Y."/>
            <person name="Fujita K."/>
            <person name="Isono K."/>
            <person name="Choi S."/>
            <person name="Ohtsubo E."/>
            <person name="Baba T."/>
            <person name="Wanner B.L."/>
            <person name="Mori H."/>
            <person name="Horiuchi T."/>
        </authorList>
    </citation>
    <scope>NUCLEOTIDE SEQUENCE [LARGE SCALE GENOMIC DNA]</scope>
    <source>
        <strain>K12 / W3110 / ATCC 27325 / DSM 5911</strain>
    </source>
</reference>
<reference key="6">
    <citation type="journal article" date="1974" name="Nature">
        <title>Structural homology of the glutamine amidotransferase subunits of the anthranilate synthetases of Escherichia coli, Salmonella typhimurium and Serratia marcescens.</title>
        <authorList>
            <person name="Li S.-L."/>
            <person name="Hanlon J."/>
            <person name="Yanofsky C."/>
        </authorList>
    </citation>
    <scope>PROTEIN SEQUENCE OF 2-62</scope>
</reference>
<reference key="7">
    <citation type="journal article" date="1966" name="J. Biol. Chem.">
        <title>Anthranilate synthetase. Partial purification and some kinetic studies on the enzyme from Escherichia coli.</title>
        <authorList>
            <person name="Baker T.I."/>
            <person name="Crawford I.P."/>
        </authorList>
    </citation>
    <scope>FUNCTION</scope>
    <scope>BIOPHYSICOCHEMICAL PROPERTIES</scope>
    <scope>ACTIVITY REGULATION</scope>
    <scope>CATALYTIC ACTIVITY</scope>
</reference>
<reference key="8">
    <citation type="journal article" date="1973" name="J. Biol. Chem.">
        <title>Feedback regulation in the anthranilate aggregate from wild type and mutant strains of Escherichia coli.</title>
        <authorList>
            <person name="Pabst M.J."/>
            <person name="Kuhn J.C."/>
            <person name="Somerville R.L."/>
        </authorList>
    </citation>
    <scope>FUNCTION</scope>
    <scope>BIOPHYSICOCHEMICAL PROPERTIES</scope>
    <scope>ACTIVITY REGULATION</scope>
    <scope>CATALYTIC ACTIVITY</scope>
</reference>
<reference key="9">
    <citation type="journal article" date="1986" name="Biochem. Cell Biol.">
        <title>The anthranilate aggregate of Escherichia coli: kinetics of inhibition by tryptophan of phosphoribosyltransferase.</title>
        <authorList>
            <person name="Gonzalez J.E."/>
            <person name="Somerville R.L."/>
        </authorList>
    </citation>
    <scope>FUNCTION</scope>
    <scope>BIOPHYSICOCHEMICAL PROPERTIES</scope>
    <scope>ACTIVITY REGULATION</scope>
    <scope>CATALYTIC ACTIVITY</scope>
</reference>
<reference key="10">
    <citation type="journal article" date="1997" name="Electrophoresis">
        <title>Escherichia coli proteome analysis using the gene-protein database.</title>
        <authorList>
            <person name="VanBogelen R.A."/>
            <person name="Abshire K.Z."/>
            <person name="Moldover B."/>
            <person name="Olson E.R."/>
            <person name="Neidhardt F.C."/>
        </authorList>
    </citation>
    <scope>IDENTIFICATION BY 2D-GEL</scope>
</reference>
<name>TRPGD_ECOLI</name>
<organism>
    <name type="scientific">Escherichia coli (strain K12)</name>
    <dbReference type="NCBI Taxonomy" id="83333"/>
    <lineage>
        <taxon>Bacteria</taxon>
        <taxon>Pseudomonadati</taxon>
        <taxon>Pseudomonadota</taxon>
        <taxon>Gammaproteobacteria</taxon>
        <taxon>Enterobacterales</taxon>
        <taxon>Enterobacteriaceae</taxon>
        <taxon>Escherichia</taxon>
    </lineage>
</organism>
<dbReference type="EC" id="4.1.3.27" evidence="4 6"/>
<dbReference type="EC" id="2.4.2.18" evidence="3 4"/>
<dbReference type="EMBL" id="V00372">
    <property type="protein sequence ID" value="CAA23672.1"/>
    <property type="molecule type" value="Genomic_DNA"/>
</dbReference>
<dbReference type="EMBL" id="V00367">
    <property type="protein sequence ID" value="CAA23665.1"/>
    <property type="molecule type" value="Genomic_DNA"/>
</dbReference>
<dbReference type="EMBL" id="J01714">
    <property type="protein sequence ID" value="AAA57298.1"/>
    <property type="molecule type" value="Genomic_DNA"/>
</dbReference>
<dbReference type="EMBL" id="U00096">
    <property type="protein sequence ID" value="AAC74345.1"/>
    <property type="molecule type" value="Genomic_DNA"/>
</dbReference>
<dbReference type="EMBL" id="AP009048">
    <property type="protein sequence ID" value="BAA14798.1"/>
    <property type="molecule type" value="Genomic_DNA"/>
</dbReference>
<dbReference type="PIR" id="B64874">
    <property type="entry name" value="NNEC2"/>
</dbReference>
<dbReference type="RefSeq" id="NP_415779.1">
    <property type="nucleotide sequence ID" value="NC_000913.3"/>
</dbReference>
<dbReference type="RefSeq" id="WP_000763511.1">
    <property type="nucleotide sequence ID" value="NZ_STEB01000005.1"/>
</dbReference>
<dbReference type="SMR" id="P00904"/>
<dbReference type="BioGRID" id="4260123">
    <property type="interactions" value="27"/>
</dbReference>
<dbReference type="ComplexPortal" id="CPX-4783">
    <property type="entry name" value="Anthranilate synthase complex"/>
</dbReference>
<dbReference type="FunCoup" id="P00904">
    <property type="interactions" value="592"/>
</dbReference>
<dbReference type="STRING" id="511145.b1263"/>
<dbReference type="MEROPS" id="C26.960"/>
<dbReference type="jPOST" id="P00904"/>
<dbReference type="PaxDb" id="511145-b1263"/>
<dbReference type="EnsemblBacteria" id="AAC74345">
    <property type="protein sequence ID" value="AAC74345"/>
    <property type="gene ID" value="b1263"/>
</dbReference>
<dbReference type="GeneID" id="75203375"/>
<dbReference type="GeneID" id="945109"/>
<dbReference type="KEGG" id="ecj:JW1255"/>
<dbReference type="KEGG" id="eco:b1263"/>
<dbReference type="KEGG" id="ecoc:C3026_07410"/>
<dbReference type="PATRIC" id="fig|1411691.4.peg.1020"/>
<dbReference type="EchoBASE" id="EB1020"/>
<dbReference type="eggNOG" id="COG0512">
    <property type="taxonomic scope" value="Bacteria"/>
</dbReference>
<dbReference type="eggNOG" id="COG0547">
    <property type="taxonomic scope" value="Bacteria"/>
</dbReference>
<dbReference type="HOGENOM" id="CLU_014340_4_0_6"/>
<dbReference type="InParanoid" id="P00904"/>
<dbReference type="OMA" id="GPMTNPA"/>
<dbReference type="OrthoDB" id="9806430at2"/>
<dbReference type="PhylomeDB" id="P00904"/>
<dbReference type="BioCyc" id="EcoCyc:ANTHRANSYNCOMPII-MONOMER"/>
<dbReference type="BioCyc" id="MetaCyc:ANTHRANSYNCOMPII-MONOMER"/>
<dbReference type="SABIO-RK" id="P00904"/>
<dbReference type="UniPathway" id="UPA00035">
    <property type="reaction ID" value="UER00040"/>
</dbReference>
<dbReference type="UniPathway" id="UPA00035">
    <property type="reaction ID" value="UER00041"/>
</dbReference>
<dbReference type="PRO" id="PR:P00904"/>
<dbReference type="Proteomes" id="UP000000625">
    <property type="component" value="Chromosome"/>
</dbReference>
<dbReference type="GO" id="GO:0005950">
    <property type="term" value="C:anthranilate synthase complex"/>
    <property type="evidence" value="ECO:0000303"/>
    <property type="project" value="ComplexPortal"/>
</dbReference>
<dbReference type="GO" id="GO:0004048">
    <property type="term" value="F:anthranilate phosphoribosyltransferase activity"/>
    <property type="evidence" value="ECO:0000314"/>
    <property type="project" value="EcoCyc"/>
</dbReference>
<dbReference type="GO" id="GO:0004049">
    <property type="term" value="F:anthranilate synthase activity"/>
    <property type="evidence" value="ECO:0000314"/>
    <property type="project" value="EcoCyc"/>
</dbReference>
<dbReference type="GO" id="GO:0000287">
    <property type="term" value="F:magnesium ion binding"/>
    <property type="evidence" value="ECO:0007669"/>
    <property type="project" value="UniProtKB-UniRule"/>
</dbReference>
<dbReference type="GO" id="GO:0000162">
    <property type="term" value="P:L-tryptophan biosynthetic process"/>
    <property type="evidence" value="ECO:0000314"/>
    <property type="project" value="EcoCyc"/>
</dbReference>
<dbReference type="GO" id="GO:0002047">
    <property type="term" value="P:phenazine biosynthetic process"/>
    <property type="evidence" value="ECO:0000318"/>
    <property type="project" value="GO_Central"/>
</dbReference>
<dbReference type="CDD" id="cd01743">
    <property type="entry name" value="GATase1_Anthranilate_Synthase"/>
    <property type="match status" value="1"/>
</dbReference>
<dbReference type="FunFam" id="1.20.970.10:FF:000003">
    <property type="entry name" value="Anthranilate phosphoribosyltransferase"/>
    <property type="match status" value="1"/>
</dbReference>
<dbReference type="FunFam" id="3.40.1030.10:FF:000002">
    <property type="entry name" value="Anthranilate phosphoribosyltransferase"/>
    <property type="match status" value="1"/>
</dbReference>
<dbReference type="FunFam" id="3.40.50.880:FF:000021">
    <property type="entry name" value="Anthranilate phosphoribosyltransferase"/>
    <property type="match status" value="1"/>
</dbReference>
<dbReference type="Gene3D" id="3.40.50.880">
    <property type="match status" value="1"/>
</dbReference>
<dbReference type="Gene3D" id="3.40.1030.10">
    <property type="entry name" value="Nucleoside phosphorylase/phosphoribosyltransferase catalytic domain"/>
    <property type="match status" value="1"/>
</dbReference>
<dbReference type="Gene3D" id="1.20.970.10">
    <property type="entry name" value="Transferase, Pyrimidine Nucleoside Phosphorylase, Chain C"/>
    <property type="match status" value="1"/>
</dbReference>
<dbReference type="HAMAP" id="MF_00211">
    <property type="entry name" value="TrpD"/>
    <property type="match status" value="1"/>
</dbReference>
<dbReference type="InterPro" id="IPR005940">
    <property type="entry name" value="Anthranilate_Pribosyl_Tfrase"/>
</dbReference>
<dbReference type="InterPro" id="IPR029062">
    <property type="entry name" value="Class_I_gatase-like"/>
</dbReference>
<dbReference type="InterPro" id="IPR017926">
    <property type="entry name" value="GATASE"/>
</dbReference>
<dbReference type="InterPro" id="IPR000312">
    <property type="entry name" value="Glycosyl_Trfase_fam3"/>
</dbReference>
<dbReference type="InterPro" id="IPR017459">
    <property type="entry name" value="Glycosyl_Trfase_fam3_N_dom"/>
</dbReference>
<dbReference type="InterPro" id="IPR036320">
    <property type="entry name" value="Glycosyl_Trfase_fam3_N_dom_sf"/>
</dbReference>
<dbReference type="InterPro" id="IPR035902">
    <property type="entry name" value="Nuc_phospho_transferase"/>
</dbReference>
<dbReference type="InterPro" id="IPR006221">
    <property type="entry name" value="TrpG/PapA_dom"/>
</dbReference>
<dbReference type="NCBIfam" id="NF007073">
    <property type="entry name" value="PRK09522.1"/>
    <property type="match status" value="1"/>
</dbReference>
<dbReference type="NCBIfam" id="TIGR01245">
    <property type="entry name" value="trpD"/>
    <property type="match status" value="1"/>
</dbReference>
<dbReference type="NCBIfam" id="TIGR00566">
    <property type="entry name" value="trpG_papA"/>
    <property type="match status" value="1"/>
</dbReference>
<dbReference type="PANTHER" id="PTHR43285">
    <property type="entry name" value="ANTHRANILATE PHOSPHORIBOSYLTRANSFERASE"/>
    <property type="match status" value="1"/>
</dbReference>
<dbReference type="PANTHER" id="PTHR43285:SF2">
    <property type="entry name" value="ANTHRANILATE PHOSPHORIBOSYLTRANSFERASE"/>
    <property type="match status" value="1"/>
</dbReference>
<dbReference type="Pfam" id="PF00117">
    <property type="entry name" value="GATase"/>
    <property type="match status" value="1"/>
</dbReference>
<dbReference type="Pfam" id="PF02885">
    <property type="entry name" value="Glycos_trans_3N"/>
    <property type="match status" value="1"/>
</dbReference>
<dbReference type="Pfam" id="PF00591">
    <property type="entry name" value="Glycos_transf_3"/>
    <property type="match status" value="1"/>
</dbReference>
<dbReference type="PRINTS" id="PR00097">
    <property type="entry name" value="ANTSNTHASEII"/>
</dbReference>
<dbReference type="PRINTS" id="PR00099">
    <property type="entry name" value="CPSGATASE"/>
</dbReference>
<dbReference type="PRINTS" id="PR00096">
    <property type="entry name" value="GATASE"/>
</dbReference>
<dbReference type="SUPFAM" id="SSF52317">
    <property type="entry name" value="Class I glutamine amidotransferase-like"/>
    <property type="match status" value="1"/>
</dbReference>
<dbReference type="SUPFAM" id="SSF52418">
    <property type="entry name" value="Nucleoside phosphorylase/phosphoribosyltransferase catalytic domain"/>
    <property type="match status" value="1"/>
</dbReference>
<dbReference type="SUPFAM" id="SSF47648">
    <property type="entry name" value="Nucleoside phosphorylase/phosphoribosyltransferase N-terminal domain"/>
    <property type="match status" value="1"/>
</dbReference>
<dbReference type="PROSITE" id="PS51273">
    <property type="entry name" value="GATASE_TYPE_1"/>
    <property type="match status" value="1"/>
</dbReference>
<feature type="initiator methionine" description="Removed" evidence="5">
    <location>
        <position position="1"/>
    </location>
</feature>
<feature type="chain" id="PRO_0000056877" description="Bifunctional protein TrpGD">
    <location>
        <begin position="2"/>
        <end position="531"/>
    </location>
</feature>
<feature type="domain" description="Glutamine amidotransferase type-1">
    <location>
        <begin position="3"/>
        <end position="196"/>
    </location>
</feature>
<feature type="region of interest" description="Anthranilate phosphoribosyltransferase">
    <location>
        <begin position="202"/>
        <end position="531"/>
    </location>
</feature>
<feature type="active site" description="Nucleophile; for GATase activity" evidence="2">
    <location>
        <position position="84"/>
    </location>
</feature>
<feature type="active site" description="For GATase activity" evidence="1">
    <location>
        <position position="170"/>
    </location>
</feature>
<feature type="active site" description="For GATase activity" evidence="1">
    <location>
        <position position="172"/>
    </location>
</feature>
<feature type="binding site" evidence="2">
    <location>
        <begin position="57"/>
        <end position="59"/>
    </location>
    <ligand>
        <name>L-glutamine</name>
        <dbReference type="ChEBI" id="CHEBI:58359"/>
    </ligand>
</feature>
<feature type="binding site" evidence="2">
    <location>
        <position position="88"/>
    </location>
    <ligand>
        <name>L-glutamine</name>
        <dbReference type="ChEBI" id="CHEBI:58359"/>
    </ligand>
</feature>
<feature type="binding site" evidence="2">
    <location>
        <begin position="134"/>
        <end position="135"/>
    </location>
    <ligand>
        <name>L-glutamine</name>
        <dbReference type="ChEBI" id="CHEBI:58359"/>
    </ligand>
</feature>
<feature type="sequence conflict" description="In Ref. 2; CAA23665." evidence="7" ref="2">
    <original>P</original>
    <variation>A</variation>
    <location>
        <position position="61"/>
    </location>
</feature>
<feature type="sequence conflict" description="In Ref. 1; CAA23672 and 2; CAA23665." evidence="7" ref="1 2">
    <original>Q</original>
    <variation>H</variation>
    <location>
        <position position="192"/>
    </location>
</feature>
<accession>P00904</accession>
<accession>P76833</accession>
<accession>P76835</accession>
<accession>P78302</accession>
<comment type="function">
    <text evidence="3 4 6">Part of a heterotetrameric complex that catalyzes the two-step biosynthesis of anthranilate, an intermediate in the biosynthesis of L-tryptophan. In the first step, the glutamine-binding beta subunit (TrpG) of anthranilate synthase (AS) provides the glutamine amidotransferase activity which generates ammonia as a substrate that, along with chorismate, is used in the second step, catalyzed by the large alpha subunit of AS (TrpE) to produce anthranilate. In the absence of TrpG, TrpE can synthesize anthranilate directly from chorismate and high concentrations of ammonia. In addition to synthesizing anthranilate, it also catalyzes the second step of the pathway, the transfer of the phosphoribosyl group of 5-phosphorylribose-1-pyrophosphate (PRPP) to anthranilate.</text>
</comment>
<comment type="catalytic activity">
    <reaction evidence="4 6">
        <text>chorismate + L-glutamine = anthranilate + pyruvate + L-glutamate + H(+)</text>
        <dbReference type="Rhea" id="RHEA:21732"/>
        <dbReference type="ChEBI" id="CHEBI:15361"/>
        <dbReference type="ChEBI" id="CHEBI:15378"/>
        <dbReference type="ChEBI" id="CHEBI:16567"/>
        <dbReference type="ChEBI" id="CHEBI:29748"/>
        <dbReference type="ChEBI" id="CHEBI:29985"/>
        <dbReference type="ChEBI" id="CHEBI:58359"/>
        <dbReference type="EC" id="4.1.3.27"/>
    </reaction>
</comment>
<comment type="catalytic activity">
    <reaction evidence="3 4">
        <text>N-(5-phospho-beta-D-ribosyl)anthranilate + diphosphate = 5-phospho-alpha-D-ribose 1-diphosphate + anthranilate</text>
        <dbReference type="Rhea" id="RHEA:11768"/>
        <dbReference type="ChEBI" id="CHEBI:16567"/>
        <dbReference type="ChEBI" id="CHEBI:18277"/>
        <dbReference type="ChEBI" id="CHEBI:33019"/>
        <dbReference type="ChEBI" id="CHEBI:58017"/>
        <dbReference type="EC" id="2.4.2.18"/>
    </reaction>
</comment>
<comment type="activity regulation">
    <text evidence="3 4 6">Cooperatively feedback inhibited by tryptophan.</text>
</comment>
<comment type="biophysicochemical properties">
    <kinetics>
        <KM evidence="3 4 6">1.2 uM for chorismate (at pH 7.5)</KM>
        <KM evidence="3 4 6">5 uM for chorismate (at 25 degrees Celsius and at pH 7.8)</KM>
        <KM evidence="3 4 6">360 uM for glutamine (at pH 7.5)</KM>
        <Vmax evidence="3 4 6">0.53 nmol/min/mg enzyme (at 25 degrees Celsius and at pH 7.8)</Vmax>
    </kinetics>
</comment>
<comment type="pathway">
    <text evidence="8 9 10">Amino-acid biosynthesis; L-tryptophan biosynthesis; L-tryptophan from chorismate: step 1/5.</text>
</comment>
<comment type="pathway">
    <text evidence="8 9 10">Amino-acid biosynthesis; L-tryptophan biosynthesis; L-tryptophan from chorismate: step 2/5.</text>
</comment>
<comment type="subunit">
    <text evidence="1">Heterotetramer consisting of two non-identical subunits: a beta subunit (TrpG) and a large alpha subunit (TrpE).</text>
</comment>
<comment type="similarity">
    <text evidence="7">In the C-terminal section; belongs to the anthranilate phosphoribosyltransferase family.</text>
</comment>
<keyword id="KW-0021">Allosteric enzyme</keyword>
<keyword id="KW-0028">Amino-acid biosynthesis</keyword>
<keyword id="KW-0057">Aromatic amino acid biosynthesis</keyword>
<keyword id="KW-0903">Direct protein sequencing</keyword>
<keyword id="KW-0315">Glutamine amidotransferase</keyword>
<keyword id="KW-0328">Glycosyltransferase</keyword>
<keyword id="KW-0456">Lyase</keyword>
<keyword id="KW-0511">Multifunctional enzyme</keyword>
<keyword id="KW-1185">Reference proteome</keyword>
<keyword id="KW-0808">Transferase</keyword>
<keyword id="KW-0822">Tryptophan biosynthesis</keyword>
<protein>
    <recommendedName>
        <fullName>Bifunctional protein TrpGD</fullName>
    </recommendedName>
    <domain>
        <recommendedName>
            <fullName>Anthranilate synthase component 2</fullName>
            <shortName>AS</shortName>
            <shortName>ASII</shortName>
            <ecNumber evidence="4 6">4.1.3.27</ecNumber>
        </recommendedName>
        <alternativeName>
            <fullName>Anthranilate synthase, glutamine amidotransferase component</fullName>
        </alternativeName>
    </domain>
    <domain>
        <recommendedName>
            <fullName>Anthranilate phosphoribosyltransferase</fullName>
            <ecNumber evidence="3 4">2.4.2.18</ecNumber>
        </recommendedName>
    </domain>
</protein>